<dbReference type="EC" id="6.1.1.11" evidence="1"/>
<dbReference type="EMBL" id="L43967">
    <property type="protein sequence ID" value="AAC71221.1"/>
    <property type="molecule type" value="Genomic_DNA"/>
</dbReference>
<dbReference type="EMBL" id="U09251">
    <property type="protein sequence ID" value="AAA57073.1"/>
    <property type="molecule type" value="Genomic_DNA"/>
</dbReference>
<dbReference type="EMBL" id="U02210">
    <property type="protein sequence ID" value="AAD12502.1"/>
    <property type="molecule type" value="Genomic_DNA"/>
</dbReference>
<dbReference type="PIR" id="E64200">
    <property type="entry name" value="E64200"/>
</dbReference>
<dbReference type="RefSeq" id="WP_010869286.1">
    <property type="nucleotide sequence ID" value="NC_000908.2"/>
</dbReference>
<dbReference type="SMR" id="P47251"/>
<dbReference type="FunCoup" id="P47251">
    <property type="interactions" value="198"/>
</dbReference>
<dbReference type="STRING" id="243273.MG_005"/>
<dbReference type="GeneID" id="88282120"/>
<dbReference type="KEGG" id="mge:MG_005"/>
<dbReference type="eggNOG" id="COG0172">
    <property type="taxonomic scope" value="Bacteria"/>
</dbReference>
<dbReference type="HOGENOM" id="CLU_023797_1_1_14"/>
<dbReference type="InParanoid" id="P47251"/>
<dbReference type="OrthoDB" id="9804647at2"/>
<dbReference type="BioCyc" id="MGEN243273:G1GJ2-5-MONOMER"/>
<dbReference type="UniPathway" id="UPA00906">
    <property type="reaction ID" value="UER00895"/>
</dbReference>
<dbReference type="Proteomes" id="UP000000807">
    <property type="component" value="Chromosome"/>
</dbReference>
<dbReference type="GO" id="GO:0005737">
    <property type="term" value="C:cytoplasm"/>
    <property type="evidence" value="ECO:0007669"/>
    <property type="project" value="UniProtKB-SubCell"/>
</dbReference>
<dbReference type="GO" id="GO:0005524">
    <property type="term" value="F:ATP binding"/>
    <property type="evidence" value="ECO:0007669"/>
    <property type="project" value="UniProtKB-UniRule"/>
</dbReference>
<dbReference type="GO" id="GO:0004828">
    <property type="term" value="F:serine-tRNA ligase activity"/>
    <property type="evidence" value="ECO:0007669"/>
    <property type="project" value="UniProtKB-UniRule"/>
</dbReference>
<dbReference type="GO" id="GO:0016260">
    <property type="term" value="P:selenocysteine biosynthetic process"/>
    <property type="evidence" value="ECO:0007669"/>
    <property type="project" value="UniProtKB-UniRule"/>
</dbReference>
<dbReference type="GO" id="GO:0006434">
    <property type="term" value="P:seryl-tRNA aminoacylation"/>
    <property type="evidence" value="ECO:0007669"/>
    <property type="project" value="UniProtKB-UniRule"/>
</dbReference>
<dbReference type="CDD" id="cd00770">
    <property type="entry name" value="SerRS_core"/>
    <property type="match status" value="1"/>
</dbReference>
<dbReference type="Gene3D" id="3.30.930.10">
    <property type="entry name" value="Bira Bifunctional Protein, Domain 2"/>
    <property type="match status" value="1"/>
</dbReference>
<dbReference type="Gene3D" id="1.10.287.40">
    <property type="entry name" value="Serine-tRNA synthetase, tRNA binding domain"/>
    <property type="match status" value="1"/>
</dbReference>
<dbReference type="HAMAP" id="MF_00176">
    <property type="entry name" value="Ser_tRNA_synth_type1"/>
    <property type="match status" value="1"/>
</dbReference>
<dbReference type="InterPro" id="IPR002314">
    <property type="entry name" value="aa-tRNA-synt_IIb"/>
</dbReference>
<dbReference type="InterPro" id="IPR006195">
    <property type="entry name" value="aa-tRNA-synth_II"/>
</dbReference>
<dbReference type="InterPro" id="IPR045864">
    <property type="entry name" value="aa-tRNA-synth_II/BPL/LPL"/>
</dbReference>
<dbReference type="InterPro" id="IPR002317">
    <property type="entry name" value="Ser-tRNA-ligase_type_1"/>
</dbReference>
<dbReference type="InterPro" id="IPR015866">
    <property type="entry name" value="Ser-tRNA-synth_1_N"/>
</dbReference>
<dbReference type="InterPro" id="IPR042103">
    <property type="entry name" value="SerRS_1_N_sf"/>
</dbReference>
<dbReference type="InterPro" id="IPR033729">
    <property type="entry name" value="SerRS_core"/>
</dbReference>
<dbReference type="InterPro" id="IPR010978">
    <property type="entry name" value="tRNA-bd_arm"/>
</dbReference>
<dbReference type="NCBIfam" id="TIGR00414">
    <property type="entry name" value="serS"/>
    <property type="match status" value="1"/>
</dbReference>
<dbReference type="PANTHER" id="PTHR43697:SF1">
    <property type="entry name" value="SERINE--TRNA LIGASE"/>
    <property type="match status" value="1"/>
</dbReference>
<dbReference type="PANTHER" id="PTHR43697">
    <property type="entry name" value="SERYL-TRNA SYNTHETASE"/>
    <property type="match status" value="1"/>
</dbReference>
<dbReference type="Pfam" id="PF02403">
    <property type="entry name" value="Seryl_tRNA_N"/>
    <property type="match status" value="1"/>
</dbReference>
<dbReference type="Pfam" id="PF00587">
    <property type="entry name" value="tRNA-synt_2b"/>
    <property type="match status" value="1"/>
</dbReference>
<dbReference type="PIRSF" id="PIRSF001529">
    <property type="entry name" value="Ser-tRNA-synth_IIa"/>
    <property type="match status" value="1"/>
</dbReference>
<dbReference type="PRINTS" id="PR00981">
    <property type="entry name" value="TRNASYNTHSER"/>
</dbReference>
<dbReference type="SUPFAM" id="SSF55681">
    <property type="entry name" value="Class II aaRS and biotin synthetases"/>
    <property type="match status" value="1"/>
</dbReference>
<dbReference type="SUPFAM" id="SSF46589">
    <property type="entry name" value="tRNA-binding arm"/>
    <property type="match status" value="1"/>
</dbReference>
<dbReference type="PROSITE" id="PS50862">
    <property type="entry name" value="AA_TRNA_LIGASE_II"/>
    <property type="match status" value="1"/>
</dbReference>
<keyword id="KW-0030">Aminoacyl-tRNA synthetase</keyword>
<keyword id="KW-0067">ATP-binding</keyword>
<keyword id="KW-0963">Cytoplasm</keyword>
<keyword id="KW-0436">Ligase</keyword>
<keyword id="KW-0547">Nucleotide-binding</keyword>
<keyword id="KW-0648">Protein biosynthesis</keyword>
<keyword id="KW-1185">Reference proteome</keyword>
<sequence>MLDPNKLRNNYDFFKKKLLERNVNEQLLNQFIQTDKLMRKNLQQLELANQKQSLLAKQVAKQKDNKKLLAESKELKQKIENLNNAYKDSQNISQDLLLNFPNIAHESVPVGKNESANLELLKEGRKPVFDFKPLPHRELCEKLNLVAFDKATKISGTRFVAYTDKAAKLLRAITNLMIDLNKSKYQEWNLPVVINELSLRSTGQLPKFKDDVFKLENTRYYLSPTLEVQLINLHANEIFNEEDLPKYYTATGINFRQEAGSAGKQTKGTIRLHQFQKTELVKFCKPENAINELEAMVRDAEQILKALKLPFRRLLLCTGDMGFSAEKTYDLEVWMAASNEYREVSSCSSCGDFQARRAMIRYKDINNGKNSYVATLNGTALSIDRIFAAILENFQTKDGKILIPQALKKYLDFDTIK</sequence>
<protein>
    <recommendedName>
        <fullName evidence="1">Serine--tRNA ligase</fullName>
        <ecNumber evidence="1">6.1.1.11</ecNumber>
    </recommendedName>
    <alternativeName>
        <fullName evidence="1">Seryl-tRNA synthetase</fullName>
        <shortName evidence="1">SerRS</shortName>
    </alternativeName>
    <alternativeName>
        <fullName evidence="1">Seryl-tRNA(Ser/Sec) synthetase</fullName>
    </alternativeName>
</protein>
<accession>P47251</accession>
<organism>
    <name type="scientific">Mycoplasma genitalium (strain ATCC 33530 / DSM 19775 / NCTC 10195 / G37)</name>
    <name type="common">Mycoplasmoides genitalium</name>
    <dbReference type="NCBI Taxonomy" id="243273"/>
    <lineage>
        <taxon>Bacteria</taxon>
        <taxon>Bacillati</taxon>
        <taxon>Mycoplasmatota</taxon>
        <taxon>Mycoplasmoidales</taxon>
        <taxon>Mycoplasmoidaceae</taxon>
        <taxon>Mycoplasmoides</taxon>
    </lineage>
</organism>
<gene>
    <name evidence="1" type="primary">serS</name>
    <name type="ordered locus">MG005</name>
</gene>
<comment type="function">
    <text evidence="1">Catalyzes the attachment of serine to tRNA(Ser). Is also able to aminoacylate tRNA(Sec) with serine, to form the misacylated tRNA L-seryl-tRNA(Sec), which will be further converted into selenocysteinyl-tRNA(Sec).</text>
</comment>
<comment type="catalytic activity">
    <reaction evidence="1">
        <text>tRNA(Ser) + L-serine + ATP = L-seryl-tRNA(Ser) + AMP + diphosphate + H(+)</text>
        <dbReference type="Rhea" id="RHEA:12292"/>
        <dbReference type="Rhea" id="RHEA-COMP:9669"/>
        <dbReference type="Rhea" id="RHEA-COMP:9703"/>
        <dbReference type="ChEBI" id="CHEBI:15378"/>
        <dbReference type="ChEBI" id="CHEBI:30616"/>
        <dbReference type="ChEBI" id="CHEBI:33019"/>
        <dbReference type="ChEBI" id="CHEBI:33384"/>
        <dbReference type="ChEBI" id="CHEBI:78442"/>
        <dbReference type="ChEBI" id="CHEBI:78533"/>
        <dbReference type="ChEBI" id="CHEBI:456215"/>
        <dbReference type="EC" id="6.1.1.11"/>
    </reaction>
</comment>
<comment type="catalytic activity">
    <reaction evidence="1">
        <text>tRNA(Sec) + L-serine + ATP = L-seryl-tRNA(Sec) + AMP + diphosphate + H(+)</text>
        <dbReference type="Rhea" id="RHEA:42580"/>
        <dbReference type="Rhea" id="RHEA-COMP:9742"/>
        <dbReference type="Rhea" id="RHEA-COMP:10128"/>
        <dbReference type="ChEBI" id="CHEBI:15378"/>
        <dbReference type="ChEBI" id="CHEBI:30616"/>
        <dbReference type="ChEBI" id="CHEBI:33019"/>
        <dbReference type="ChEBI" id="CHEBI:33384"/>
        <dbReference type="ChEBI" id="CHEBI:78442"/>
        <dbReference type="ChEBI" id="CHEBI:78533"/>
        <dbReference type="ChEBI" id="CHEBI:456215"/>
        <dbReference type="EC" id="6.1.1.11"/>
    </reaction>
</comment>
<comment type="pathway">
    <text evidence="1">Aminoacyl-tRNA biosynthesis; selenocysteinyl-tRNA(Sec) biosynthesis; L-seryl-tRNA(Sec) from L-serine and tRNA(Sec): step 1/1.</text>
</comment>
<comment type="subunit">
    <text evidence="1">Homodimer. The tRNA molecule binds across the dimer.</text>
</comment>
<comment type="subcellular location">
    <subcellularLocation>
        <location evidence="1">Cytoplasm</location>
    </subcellularLocation>
</comment>
<comment type="domain">
    <text evidence="1">Consists of two distinct domains, a catalytic core and a N-terminal extension that is involved in tRNA binding.</text>
</comment>
<comment type="similarity">
    <text evidence="1">Belongs to the class-II aminoacyl-tRNA synthetase family. Type-1 seryl-tRNA synthetase subfamily.</text>
</comment>
<evidence type="ECO:0000255" key="1">
    <source>
        <dbReference type="HAMAP-Rule" id="MF_00176"/>
    </source>
</evidence>
<proteinExistence type="inferred from homology"/>
<feature type="chain" id="PRO_0000122079" description="Serine--tRNA ligase">
    <location>
        <begin position="1"/>
        <end position="417"/>
    </location>
</feature>
<feature type="binding site" evidence="1">
    <location>
        <begin position="225"/>
        <end position="227"/>
    </location>
    <ligand>
        <name>L-serine</name>
        <dbReference type="ChEBI" id="CHEBI:33384"/>
    </ligand>
</feature>
<feature type="binding site" evidence="1">
    <location>
        <begin position="256"/>
        <end position="258"/>
    </location>
    <ligand>
        <name>ATP</name>
        <dbReference type="ChEBI" id="CHEBI:30616"/>
    </ligand>
</feature>
<feature type="binding site" evidence="1">
    <location>
        <position position="279"/>
    </location>
    <ligand>
        <name>L-serine</name>
        <dbReference type="ChEBI" id="CHEBI:33384"/>
    </ligand>
</feature>
<feature type="binding site" evidence="1">
    <location>
        <begin position="343"/>
        <end position="346"/>
    </location>
    <ligand>
        <name>ATP</name>
        <dbReference type="ChEBI" id="CHEBI:30616"/>
    </ligand>
</feature>
<feature type="binding site" evidence="1">
    <location>
        <position position="379"/>
    </location>
    <ligand>
        <name>L-serine</name>
        <dbReference type="ChEBI" id="CHEBI:33384"/>
    </ligand>
</feature>
<name>SYS_MYCGE</name>
<reference key="1">
    <citation type="journal article" date="1995" name="Science">
        <title>The minimal gene complement of Mycoplasma genitalium.</title>
        <authorList>
            <person name="Fraser C.M."/>
            <person name="Gocayne J.D."/>
            <person name="White O."/>
            <person name="Adams M.D."/>
            <person name="Clayton R.A."/>
            <person name="Fleischmann R.D."/>
            <person name="Bult C.J."/>
            <person name="Kerlavage A.R."/>
            <person name="Sutton G.G."/>
            <person name="Kelley J.M."/>
            <person name="Fritchman J.L."/>
            <person name="Weidman J.F."/>
            <person name="Small K.V."/>
            <person name="Sandusky M."/>
            <person name="Fuhrmann J.L."/>
            <person name="Nguyen D.T."/>
            <person name="Utterback T.R."/>
            <person name="Saudek D.M."/>
            <person name="Phillips C.A."/>
            <person name="Merrick J.M."/>
            <person name="Tomb J.-F."/>
            <person name="Dougherty B.A."/>
            <person name="Bott K.F."/>
            <person name="Hu P.-C."/>
            <person name="Lucier T.S."/>
            <person name="Peterson S.N."/>
            <person name="Smith H.O."/>
            <person name="Hutchison C.A. III"/>
            <person name="Venter J.C."/>
        </authorList>
    </citation>
    <scope>NUCLEOTIDE SEQUENCE [LARGE SCALE GENOMIC DNA]</scope>
    <source>
        <strain>ATCC 33530 / DSM 19775 / NCTC 10195 / G37</strain>
    </source>
</reference>
<reference key="2">
    <citation type="journal article" date="1994" name="J. Bacteriol.">
        <title>An unusual gene containing a dnaJ N-terminal box flanks the putative origin of replication of Mycoplasma genitalium.</title>
        <authorList>
            <person name="Bailey C.C."/>
            <person name="Bott K.F."/>
        </authorList>
    </citation>
    <scope>NUCLEOTIDE SEQUENCE [GENOMIC DNA] OF 1-125</scope>
    <source>
        <strain>ATCC 33530 / DSM 19775 / NCTC 10195 / G37</strain>
    </source>
</reference>
<reference key="3">
    <citation type="journal article" date="1993" name="J. Bacteriol.">
        <title>A survey of the Mycoplasma genitalium genome by using random sequencing.</title>
        <authorList>
            <person name="Peterson S.N."/>
            <person name="Hu P.-C."/>
            <person name="Bott K.F."/>
            <person name="Hutchison C.A. III"/>
        </authorList>
    </citation>
    <scope>NUCLEOTIDE SEQUENCE [GENOMIC DNA] OF 6-112</scope>
    <source>
        <strain>ATCC 33530 / DSM 19775 / NCTC 10195 / G37</strain>
    </source>
</reference>